<dbReference type="EMBL" id="BC092038">
    <property type="protein sequence ID" value="AAH92038.1"/>
    <property type="molecule type" value="mRNA"/>
</dbReference>
<dbReference type="RefSeq" id="NP_001090001.1">
    <property type="nucleotide sequence ID" value="NM_001096532.1"/>
</dbReference>
<dbReference type="SMR" id="Q58E77"/>
<dbReference type="DNASU" id="735072"/>
<dbReference type="GeneID" id="735072"/>
<dbReference type="KEGG" id="xla:735072"/>
<dbReference type="AGR" id="Xenbase:XB-GENE-6254497"/>
<dbReference type="CTD" id="735072"/>
<dbReference type="Xenbase" id="XB-GENE-6254497">
    <property type="gene designation" value="wdr82.S"/>
</dbReference>
<dbReference type="OMA" id="HNEGYIR"/>
<dbReference type="OrthoDB" id="27537at2759"/>
<dbReference type="Proteomes" id="UP000186698">
    <property type="component" value="Chromosome 4S"/>
</dbReference>
<dbReference type="Bgee" id="735072">
    <property type="expression patterns" value="Expressed in blastula and 19 other cell types or tissues"/>
</dbReference>
<dbReference type="GO" id="GO:0005694">
    <property type="term" value="C:chromosome"/>
    <property type="evidence" value="ECO:0007669"/>
    <property type="project" value="UniProtKB-SubCell"/>
</dbReference>
<dbReference type="GO" id="GO:0072357">
    <property type="term" value="C:PTW/PP1 phosphatase complex"/>
    <property type="evidence" value="ECO:0000250"/>
    <property type="project" value="UniProtKB"/>
</dbReference>
<dbReference type="GO" id="GO:0048188">
    <property type="term" value="C:Set1C/COMPASS complex"/>
    <property type="evidence" value="ECO:0000318"/>
    <property type="project" value="GO_Central"/>
</dbReference>
<dbReference type="GO" id="GO:0003682">
    <property type="term" value="F:chromatin binding"/>
    <property type="evidence" value="ECO:0000318"/>
    <property type="project" value="GO_Central"/>
</dbReference>
<dbReference type="GO" id="GO:0006353">
    <property type="term" value="P:DNA-templated transcription termination"/>
    <property type="evidence" value="ECO:0007669"/>
    <property type="project" value="UniProtKB-KW"/>
</dbReference>
<dbReference type="GO" id="GO:0110064">
    <property type="term" value="P:lncRNA catabolic process"/>
    <property type="evidence" value="ECO:0000250"/>
    <property type="project" value="UniProtKB"/>
</dbReference>
<dbReference type="GO" id="GO:0032785">
    <property type="term" value="P:negative regulation of DNA-templated transcription, elongation"/>
    <property type="evidence" value="ECO:0000250"/>
    <property type="project" value="UniProtKB"/>
</dbReference>
<dbReference type="GO" id="GO:0140744">
    <property type="term" value="P:negative regulation of lncRNA transcription"/>
    <property type="evidence" value="ECO:0000250"/>
    <property type="project" value="UniProtKB"/>
</dbReference>
<dbReference type="GO" id="GO:0071027">
    <property type="term" value="P:nuclear RNA surveillance"/>
    <property type="evidence" value="ECO:0000250"/>
    <property type="project" value="UniProtKB"/>
</dbReference>
<dbReference type="GO" id="GO:0032968">
    <property type="term" value="P:positive regulation of transcription elongation by RNA polymerase II"/>
    <property type="evidence" value="ECO:0000250"/>
    <property type="project" value="UniProtKB"/>
</dbReference>
<dbReference type="GO" id="GO:0001111">
    <property type="term" value="P:RNA polymerase II promoter clearance"/>
    <property type="evidence" value="ECO:0000250"/>
    <property type="project" value="UniProtKB"/>
</dbReference>
<dbReference type="CDD" id="cd00200">
    <property type="entry name" value="WD40"/>
    <property type="match status" value="1"/>
</dbReference>
<dbReference type="FunFam" id="2.130.10.10:FF:000065">
    <property type="entry name" value="WD repeat-containing protein 82"/>
    <property type="match status" value="1"/>
</dbReference>
<dbReference type="Gene3D" id="2.130.10.10">
    <property type="entry name" value="YVTN repeat-like/Quinoprotein amine dehydrogenase"/>
    <property type="match status" value="1"/>
</dbReference>
<dbReference type="InterPro" id="IPR020472">
    <property type="entry name" value="G-protein_beta_WD-40_rep"/>
</dbReference>
<dbReference type="InterPro" id="IPR037867">
    <property type="entry name" value="Swd2/WDR82"/>
</dbReference>
<dbReference type="InterPro" id="IPR015943">
    <property type="entry name" value="WD40/YVTN_repeat-like_dom_sf"/>
</dbReference>
<dbReference type="InterPro" id="IPR036322">
    <property type="entry name" value="WD40_repeat_dom_sf"/>
</dbReference>
<dbReference type="InterPro" id="IPR001680">
    <property type="entry name" value="WD40_rpt"/>
</dbReference>
<dbReference type="PANTHER" id="PTHR19861:SF0">
    <property type="entry name" value="WD REPEAT-CONTAINING PROTEIN 82"/>
    <property type="match status" value="1"/>
</dbReference>
<dbReference type="PANTHER" id="PTHR19861">
    <property type="entry name" value="WD40 REPEAT PROTEIN SWD2"/>
    <property type="match status" value="1"/>
</dbReference>
<dbReference type="Pfam" id="PF00400">
    <property type="entry name" value="WD40"/>
    <property type="match status" value="3"/>
</dbReference>
<dbReference type="PRINTS" id="PR00320">
    <property type="entry name" value="GPROTEINBRPT"/>
</dbReference>
<dbReference type="SMART" id="SM00320">
    <property type="entry name" value="WD40"/>
    <property type="match status" value="6"/>
</dbReference>
<dbReference type="SUPFAM" id="SSF50978">
    <property type="entry name" value="WD40 repeat-like"/>
    <property type="match status" value="1"/>
</dbReference>
<dbReference type="PROSITE" id="PS00678">
    <property type="entry name" value="WD_REPEATS_1"/>
    <property type="match status" value="1"/>
</dbReference>
<dbReference type="PROSITE" id="PS50082">
    <property type="entry name" value="WD_REPEATS_2"/>
    <property type="match status" value="3"/>
</dbReference>
<dbReference type="PROSITE" id="PS50294">
    <property type="entry name" value="WD_REPEATS_REGION"/>
    <property type="match status" value="1"/>
</dbReference>
<reference key="1">
    <citation type="submission" date="2005-03" db="EMBL/GenBank/DDBJ databases">
        <authorList>
            <consortium name="NIH - Xenopus Gene Collection (XGC) project"/>
        </authorList>
    </citation>
    <scope>NUCLEOTIDE SEQUENCE [LARGE SCALE MRNA]</scope>
    <source>
        <tissue>Egg</tissue>
    </source>
</reference>
<protein>
    <recommendedName>
        <fullName evidence="3">WD repeat-containing protein 82-B</fullName>
    </recommendedName>
</protein>
<evidence type="ECO:0000250" key="1">
    <source>
        <dbReference type="UniProtKB" id="Q6UXN9"/>
    </source>
</evidence>
<evidence type="ECO:0000250" key="2">
    <source>
        <dbReference type="UniProtKB" id="Q8BFQ4"/>
    </source>
</evidence>
<evidence type="ECO:0000305" key="3"/>
<name>WD82B_XENLA</name>
<accession>Q58E77</accession>
<keyword id="KW-0158">Chromosome</keyword>
<keyword id="KW-0963">Cytoplasm</keyword>
<keyword id="KW-0539">Nucleus</keyword>
<keyword id="KW-1185">Reference proteome</keyword>
<keyword id="KW-0677">Repeat</keyword>
<keyword id="KW-0804">Transcription</keyword>
<keyword id="KW-0805">Transcription regulation</keyword>
<keyword id="KW-0806">Transcription termination</keyword>
<keyword id="KW-0853">WD repeat</keyword>
<organism>
    <name type="scientific">Xenopus laevis</name>
    <name type="common">African clawed frog</name>
    <dbReference type="NCBI Taxonomy" id="8355"/>
    <lineage>
        <taxon>Eukaryota</taxon>
        <taxon>Metazoa</taxon>
        <taxon>Chordata</taxon>
        <taxon>Craniata</taxon>
        <taxon>Vertebrata</taxon>
        <taxon>Euteleostomi</taxon>
        <taxon>Amphibia</taxon>
        <taxon>Batrachia</taxon>
        <taxon>Anura</taxon>
        <taxon>Pipoidea</taxon>
        <taxon>Pipidae</taxon>
        <taxon>Xenopodinae</taxon>
        <taxon>Xenopus</taxon>
        <taxon>Xenopus</taxon>
    </lineage>
</organism>
<gene>
    <name type="primary">wdr82-b</name>
</gene>
<sequence length="313" mass="35172">MKLTDNVLRSFRVAKVFRENSDKINCFDFSPTGETVISSSDDDSIVLYDCQEGKPKRTLYSKKYGVDLIRYTHAANTVVYSSNKIDDTIRYLSLHDNKYIRYFPGHSKRVVSLSMSPVDDTFISGSLDKTIRLWDLRSPNCQGLMHLQGKPVCSFDPEGLIFAAGINSEMVKLYDLRSFDKGPFATFKMQYDRTCEWTALKFSNDGKLILLSTNGGFLRLVDAFKGAVMHTFGGYNNSKAVTLEASFTPDSQFIMIGSEDGKIHVWNCESGMKVAVLDGKHTGPITCLQFNPKFMTFASACSNMAFWLPTIDD</sequence>
<feature type="chain" id="PRO_0000279690" description="WD repeat-containing protein 82-B">
    <location>
        <begin position="1"/>
        <end position="313"/>
    </location>
</feature>
<feature type="repeat" description="WD 1">
    <location>
        <begin position="19"/>
        <end position="58"/>
    </location>
</feature>
<feature type="repeat" description="WD 2">
    <location>
        <begin position="105"/>
        <end position="144"/>
    </location>
</feature>
<feature type="repeat" description="WD 3">
    <location>
        <begin position="146"/>
        <end position="184"/>
    </location>
</feature>
<feature type="repeat" description="WD 4">
    <location>
        <begin position="192"/>
        <end position="231"/>
    </location>
</feature>
<feature type="repeat" description="WD 5">
    <location>
        <begin position="236"/>
        <end position="276"/>
    </location>
</feature>
<feature type="repeat" description="WD 6">
    <location>
        <begin position="280"/>
        <end position="313"/>
    </location>
</feature>
<comment type="function">
    <text evidence="1">Regulatory component of the SET1/COMPASS complex implicated in the tethering of this complex to transcriptional start sites of active genes. Facilitates histone H3 'Lys-4' methylation (H3K4me) via recruitment of the SETD1A or SETD1B to the 'Ser-5' phosphorylated C-terminal domain (CTD) of RNA polymerase II large subunit (POLR2A). Component of the PNUTS-PP1 protein phosphatase complex, a protein phosphatase 1 (PP1) complex that promotes RNA polymerase II transcription pause-release, allowing transcription elongation.</text>
</comment>
<comment type="subunit">
    <text evidence="1">Component of the SET1/COMPASS complex. Component of the PNUTS-PP1 phosphatase complex.</text>
</comment>
<comment type="subcellular location">
    <subcellularLocation>
        <location evidence="1">Nucleus</location>
    </subcellularLocation>
    <subcellularLocation>
        <location evidence="2">Chromosome</location>
    </subcellularLocation>
    <subcellularLocation>
        <location evidence="2">Cytoplasm</location>
    </subcellularLocation>
    <text evidence="2">Recruited at sites of high RNA polymerase II occupancy (By similarity).</text>
</comment>
<comment type="similarity">
    <text evidence="3">Belongs to the WD repeat SWD2 family.</text>
</comment>
<proteinExistence type="evidence at transcript level"/>